<keyword id="KW-0053">Apoptosis</keyword>
<keyword id="KW-0121">Carboxypeptidase</keyword>
<keyword id="KW-0325">Glycoprotein</keyword>
<keyword id="KW-0333">Golgi apparatus</keyword>
<keyword id="KW-0378">Hydrolase</keyword>
<keyword id="KW-0472">Membrane</keyword>
<keyword id="KW-0645">Protease</keyword>
<keyword id="KW-1185">Reference proteome</keyword>
<keyword id="KW-0732">Signal</keyword>
<keyword id="KW-0812">Transmembrane</keyword>
<keyword id="KW-1133">Transmembrane helix</keyword>
<dbReference type="EC" id="3.4.16.6"/>
<dbReference type="EMBL" id="GG698899">
    <property type="protein sequence ID" value="EEU45125.1"/>
    <property type="molecule type" value="Genomic_DNA"/>
</dbReference>
<dbReference type="RefSeq" id="XP_003050838.1">
    <property type="nucleotide sequence ID" value="XM_003050792.1"/>
</dbReference>
<dbReference type="SMR" id="C7YRS6"/>
<dbReference type="FunCoup" id="C7YRS6">
    <property type="interactions" value="132"/>
</dbReference>
<dbReference type="STRING" id="660122.C7YRS6"/>
<dbReference type="ESTHER" id="nech7-kex1">
    <property type="family name" value="Carboxypeptidase_S10"/>
</dbReference>
<dbReference type="MEROPS" id="S10.007"/>
<dbReference type="GlyCosmos" id="C7YRS6">
    <property type="glycosylation" value="4 sites, No reported glycans"/>
</dbReference>
<dbReference type="EnsemblFungi" id="NechaT69476">
    <property type="protein sequence ID" value="NechaP69476"/>
    <property type="gene ID" value="NechaG69476"/>
</dbReference>
<dbReference type="GeneID" id="9667997"/>
<dbReference type="KEGG" id="nhe:NECHADRAFT_69476"/>
<dbReference type="VEuPathDB" id="FungiDB:NECHADRAFT_69476"/>
<dbReference type="eggNOG" id="KOG1282">
    <property type="taxonomic scope" value="Eukaryota"/>
</dbReference>
<dbReference type="HOGENOM" id="CLU_008523_11_0_1"/>
<dbReference type="InParanoid" id="C7YRS6"/>
<dbReference type="OMA" id="EMADQFV"/>
<dbReference type="OrthoDB" id="443318at2759"/>
<dbReference type="Proteomes" id="UP000005206">
    <property type="component" value="Unassembled WGS sequence"/>
</dbReference>
<dbReference type="GO" id="GO:0016020">
    <property type="term" value="C:membrane"/>
    <property type="evidence" value="ECO:0007669"/>
    <property type="project" value="UniProtKB-KW"/>
</dbReference>
<dbReference type="GO" id="GO:0005802">
    <property type="term" value="C:trans-Golgi network"/>
    <property type="evidence" value="ECO:0007669"/>
    <property type="project" value="TreeGrafter"/>
</dbReference>
<dbReference type="GO" id="GO:0004185">
    <property type="term" value="F:serine-type carboxypeptidase activity"/>
    <property type="evidence" value="ECO:0007669"/>
    <property type="project" value="UniProtKB-EC"/>
</dbReference>
<dbReference type="GO" id="GO:0006915">
    <property type="term" value="P:apoptotic process"/>
    <property type="evidence" value="ECO:0007669"/>
    <property type="project" value="UniProtKB-KW"/>
</dbReference>
<dbReference type="GO" id="GO:0006508">
    <property type="term" value="P:proteolysis"/>
    <property type="evidence" value="ECO:0007669"/>
    <property type="project" value="UniProtKB-KW"/>
</dbReference>
<dbReference type="FunFam" id="3.40.50.1820:FF:000121">
    <property type="entry name" value="Carboxypeptidase D"/>
    <property type="match status" value="1"/>
</dbReference>
<dbReference type="Gene3D" id="3.40.50.1820">
    <property type="entry name" value="alpha/beta hydrolase"/>
    <property type="match status" value="1"/>
</dbReference>
<dbReference type="InterPro" id="IPR029058">
    <property type="entry name" value="AB_hydrolase_fold"/>
</dbReference>
<dbReference type="InterPro" id="IPR001563">
    <property type="entry name" value="Peptidase_S10"/>
</dbReference>
<dbReference type="InterPro" id="IPR033124">
    <property type="entry name" value="Ser_caboxypep_his_AS"/>
</dbReference>
<dbReference type="InterPro" id="IPR018202">
    <property type="entry name" value="Ser_caboxypep_ser_AS"/>
</dbReference>
<dbReference type="PANTHER" id="PTHR11802:SF190">
    <property type="entry name" value="PHEROMONE-PROCESSING CARBOXYPEPTIDASE KEX1"/>
    <property type="match status" value="1"/>
</dbReference>
<dbReference type="PANTHER" id="PTHR11802">
    <property type="entry name" value="SERINE PROTEASE FAMILY S10 SERINE CARBOXYPEPTIDASE"/>
    <property type="match status" value="1"/>
</dbReference>
<dbReference type="Pfam" id="PF00450">
    <property type="entry name" value="Peptidase_S10"/>
    <property type="match status" value="1"/>
</dbReference>
<dbReference type="PRINTS" id="PR00724">
    <property type="entry name" value="CRBOXYPTASEC"/>
</dbReference>
<dbReference type="SUPFAM" id="SSF53474">
    <property type="entry name" value="alpha/beta-Hydrolases"/>
    <property type="match status" value="1"/>
</dbReference>
<dbReference type="PROSITE" id="PS00560">
    <property type="entry name" value="CARBOXYPEPT_SER_HIS"/>
    <property type="match status" value="1"/>
</dbReference>
<dbReference type="PROSITE" id="PS00131">
    <property type="entry name" value="CARBOXYPEPT_SER_SER"/>
    <property type="match status" value="1"/>
</dbReference>
<organism>
    <name type="scientific">Fusarium vanettenii (strain ATCC MYA-4622 / CBS 123669 / FGSC 9596 / NRRL 45880 / 77-13-4)</name>
    <name type="common">Fusarium solani subsp. pisi</name>
    <dbReference type="NCBI Taxonomy" id="660122"/>
    <lineage>
        <taxon>Eukaryota</taxon>
        <taxon>Fungi</taxon>
        <taxon>Dikarya</taxon>
        <taxon>Ascomycota</taxon>
        <taxon>Pezizomycotina</taxon>
        <taxon>Sordariomycetes</taxon>
        <taxon>Hypocreomycetidae</taxon>
        <taxon>Hypocreales</taxon>
        <taxon>Nectriaceae</taxon>
        <taxon>Fusarium</taxon>
        <taxon>Fusarium solani species complex</taxon>
        <taxon>Fusarium vanettenii</taxon>
    </lineage>
</organism>
<proteinExistence type="inferred from homology"/>
<reference key="1">
    <citation type="journal article" date="2009" name="PLoS Genet.">
        <title>The genome of Nectria haematococca: contribution of supernumerary chromosomes to gene expansion.</title>
        <authorList>
            <person name="Coleman J.J."/>
            <person name="Rounsley S.D."/>
            <person name="Rodriguez-Carres M."/>
            <person name="Kuo A."/>
            <person name="Wasmann C.C."/>
            <person name="Grimwood J."/>
            <person name="Schmutz J."/>
            <person name="Taga M."/>
            <person name="White G.J."/>
            <person name="Zhou S."/>
            <person name="Schwartz D.C."/>
            <person name="Freitag M."/>
            <person name="Ma L.-J."/>
            <person name="Danchin E.G.J."/>
            <person name="Henrissat B."/>
            <person name="Coutinho P.M."/>
            <person name="Nelson D.R."/>
            <person name="Straney D."/>
            <person name="Napoli C.A."/>
            <person name="Barker B.M."/>
            <person name="Gribskov M."/>
            <person name="Rep M."/>
            <person name="Kroken S."/>
            <person name="Molnar I."/>
            <person name="Rensing C."/>
            <person name="Kennell J.C."/>
            <person name="Zamora J."/>
            <person name="Farman M.L."/>
            <person name="Selker E.U."/>
            <person name="Salamov A."/>
            <person name="Shapiro H."/>
            <person name="Pangilinan J."/>
            <person name="Lindquist E."/>
            <person name="Lamers C."/>
            <person name="Grigoriev I.V."/>
            <person name="Geiser D.M."/>
            <person name="Covert S.F."/>
            <person name="Temporini E."/>
            <person name="VanEtten H.D."/>
        </authorList>
    </citation>
    <scope>NUCLEOTIDE SEQUENCE [LARGE SCALE GENOMIC DNA]</scope>
    <source>
        <strain>ATCC MYA-4622 / CBS 123669 / FGSC 9596 / NRRL 45880 / 77-13-4</strain>
    </source>
</reference>
<accession>C7YRS6</accession>
<gene>
    <name type="primary">KEX1</name>
    <name type="ORF">NECHADRAFT_69476</name>
</gene>
<sequence length="613" mass="68205">MAFLSIPSPRRWAALLSLSLGPILGAADATSNSAADYYVRDLPGLPKDGPNIKMHAGHIEVTPESHGNLFFWHFENQHIADKQRTVIWINGGPGCSSEDGAMMEIGPYRLKDKENLYYNNGSWGEFANLLFVDNPVGTGYSLVDTNAYVKELDEMADQFIQFLEKWFALFPQYDRDDIYIAGESYAGQHIPYIAKAILDRNKKNPSKAWNLQGLLIGNGWISPVDQYPAYISFAHEKGIIEKGSDNDKKLQSALRGCERVIASSPGRVDYGECEEILKNILELTRDGNKCINMYDVRLTDTYPSCGMNWPPDLEYLTPYLGRKDVVDALHVTSMKSTGWKECSGAVGGAFTARNSKPAVELLPDLLKEVPVLLFSGAEDFICNHLGTEELISKLEWNGGKGFEVTPGNWAPRRDWTFEGETAGFWQEARNLTYVLIYNSSHMVPFDLPRRSRDMLDRFMGVDISNIGGDPTDSRIDGEKGPETTVGGASNKTQSAAQDHQKQLDEAKWAAYQKSGEVVLVIVIIAAIAWGYFVWRERRKGAAYHALANHDNNSHSNGFRAKSQPGDLESAAFDESELDDLHGSTPATATSARFPVNRNDTREKFVTKYAEPSS</sequence>
<protein>
    <recommendedName>
        <fullName>Pheromone-processing carboxypeptidase KEX1</fullName>
        <ecNumber>3.4.16.6</ecNumber>
    </recommendedName>
    <alternativeName>
        <fullName>Carboxypeptidase D</fullName>
    </alternativeName>
</protein>
<feature type="signal peptide" evidence="2">
    <location>
        <begin position="1"/>
        <end position="27"/>
    </location>
</feature>
<feature type="chain" id="PRO_0000411928" description="Pheromone-processing carboxypeptidase KEX1">
    <location>
        <begin position="28"/>
        <end position="613"/>
    </location>
</feature>
<feature type="topological domain" description="Lumenal" evidence="2">
    <location>
        <begin position="28"/>
        <end position="513"/>
    </location>
</feature>
<feature type="transmembrane region" description="Helical" evidence="2">
    <location>
        <begin position="514"/>
        <end position="534"/>
    </location>
</feature>
<feature type="topological domain" description="Cytoplasmic" evidence="2">
    <location>
        <begin position="535"/>
        <end position="613"/>
    </location>
</feature>
<feature type="region of interest" description="Disordered" evidence="3">
    <location>
        <begin position="466"/>
        <end position="499"/>
    </location>
</feature>
<feature type="region of interest" description="Disordered" evidence="3">
    <location>
        <begin position="569"/>
        <end position="597"/>
    </location>
</feature>
<feature type="compositionally biased region" description="Basic and acidic residues" evidence="3">
    <location>
        <begin position="471"/>
        <end position="481"/>
    </location>
</feature>
<feature type="compositionally biased region" description="Polar residues" evidence="3">
    <location>
        <begin position="486"/>
        <end position="497"/>
    </location>
</feature>
<feature type="active site" evidence="1">
    <location>
        <position position="184"/>
    </location>
</feature>
<feature type="active site" evidence="1">
    <location>
        <position position="379"/>
    </location>
</feature>
<feature type="active site" evidence="1">
    <location>
        <position position="441"/>
    </location>
</feature>
<feature type="glycosylation site" description="N-linked (GlcNAc...) asparagine" evidence="2">
    <location>
        <position position="120"/>
    </location>
</feature>
<feature type="glycosylation site" description="N-linked (GlcNAc...) asparagine" evidence="2">
    <location>
        <position position="430"/>
    </location>
</feature>
<feature type="glycosylation site" description="N-linked (GlcNAc...) asparagine" evidence="2">
    <location>
        <position position="438"/>
    </location>
</feature>
<feature type="glycosylation site" description="N-linked (GlcNAc...) asparagine" evidence="2">
    <location>
        <position position="490"/>
    </location>
</feature>
<name>KEX1_FUSV7</name>
<evidence type="ECO:0000250" key="1"/>
<evidence type="ECO:0000255" key="2"/>
<evidence type="ECO:0000256" key="3">
    <source>
        <dbReference type="SAM" id="MobiDB-lite"/>
    </source>
</evidence>
<evidence type="ECO:0000305" key="4"/>
<comment type="function">
    <text evidence="1">Protease with a carboxypeptidase B-like function involved in the C-terminal processing of the lysine and arginine residues from protein precursors. Promotes cell fusion and is involved in the programmed cell death (By similarity).</text>
</comment>
<comment type="catalytic activity">
    <reaction>
        <text>Preferential release of a C-terminal arginine or lysine residue.</text>
        <dbReference type="EC" id="3.4.16.6"/>
    </reaction>
</comment>
<comment type="subcellular location">
    <subcellularLocation>
        <location evidence="1">Golgi apparatus</location>
        <location evidence="1">trans-Golgi network membrane</location>
        <topology evidence="1">Single-pass type I membrane protein</topology>
    </subcellularLocation>
</comment>
<comment type="similarity">
    <text evidence="4">Belongs to the peptidase S10 family.</text>
</comment>